<keyword id="KW-0165">Cleavage on pair of basic residues</keyword>
<keyword id="KW-0202">Cytokine</keyword>
<keyword id="KW-1015">Disulfide bond</keyword>
<keyword id="KW-0325">Glycoprotein</keyword>
<keyword id="KW-0372">Hormone</keyword>
<keyword id="KW-1185">Reference proteome</keyword>
<keyword id="KW-0964">Secreted</keyword>
<keyword id="KW-0732">Signal</keyword>
<name>GDF15_RAT</name>
<comment type="function">
    <text evidence="1 2 4 5 7 8 9">Hormone produced in response to various stresses to confer information about those stresses to the brain, and trigger an aversive response, characterized by nausea and/or loss of appetite (PubMed:28846099, PubMed:28953886, PubMed:31928886, PubMed:34187898, PubMed:37060902). The aversive response is both required to reduce continuing exposure to those stresses at the time of exposure and to promote avoidance behavior in the future (By similarity). Acts by binding to its receptor, GFRAL, activating GFRAL-expressing neurons localized in the area postrema and nucleus tractus solitarius of the brainstem (PubMed:28846099, PubMed:28953886, PubMed:37060902). It then triggers the activation of neurons localized within the parabrachial nucleus and central amygdala, which constitutes part of the 'emergency circuit' that shapes responses to stressful conditions (PubMed:37060902). The GDF15-GFRAL signal induces expression of genes involved in metabolism, such as lipid metabolism in adipose tissues (By similarity). Contributes to the effect of metformin, an anti-diabetic drug, on appetite reduction and weight loss: produced in the kidney in response to metformin treatment, thereby activating the GDF15-GFRAL response, leading to reduced appetite and weight (PubMed:37060902). Required for avoidance behavior in response to food allergens: induced downstream of mast cell activation to promote aversion and minimize harmful effects of exposure to noxious substances (By similarity). Produced in response to anticancer drugs, such as camptothecin or cisplatin, promoting nausea and contributing to malnutrition (By similarity). Overproduced in many cancers, promoting anorexia in cancer (cachexia) (By similarity). Responsible for the risk of nausea during pregnancy: high levels of GDF15 during pregnancy, mostly originating from embryos, are associated with increased nausea (By similarity). Maternal sensitivity to nausea is probably determined by pre-pregnancy exposure to GDF15, females with naturally high level of GDF15 being less susceptible to nausea than female rats with low levels of GDF15 before pregnancy (By similarity). Promotes metabolic adaptation in response to systemic inflammation caused by bacterial and viral infections in order to promote tissue tolerance and prevent tissue damage (By similarity). Required for tissue tolerance in response to myocardial infarction by acting as an inhibitor of leukocyte integring activation, thereby protecting against cardiac rupture (By similarity). Inhibits growth hormone signaling on hepatocytes (By similarity).</text>
</comment>
<comment type="subunit">
    <text evidence="1 2">Homodimer; disulfide-linked (By similarity). Interacts with GFRAL and RET; ligand of GFRAL, which mediates GDF15 internalization and cellular signaling through interaction with RET via the formation of a 2:2:2 ternary complex composed of GDF15, GFRAL and RET (By similarity).</text>
</comment>
<comment type="subcellular location">
    <subcellularLocation>
        <location evidence="6">Secreted</location>
    </subcellularLocation>
    <text evidence="6">Secreted in the plasma.</text>
</comment>
<comment type="tissue specificity">
    <text evidence="6">Detected in plasma (at protein level).</text>
</comment>
<comment type="induction">
    <text evidence="6">Expression is up-regulated by obesity.</text>
</comment>
<comment type="similarity">
    <text evidence="11">Belongs to the TGF-beta family.</text>
</comment>
<gene>
    <name evidence="10 12" type="primary">Gdf15</name>
    <name type="synonym">Sbf</name>
</gene>
<reference key="1">
    <citation type="submission" date="1998-10" db="EMBL/GenBank/DDBJ databases">
        <title>Identification of a novel member of the TGFbeta superfamily.</title>
        <authorList>
            <person name="Boettner M."/>
            <person name="Laaff M."/>
            <person name="Suter-Crazzolara C."/>
        </authorList>
    </citation>
    <scope>NUCLEOTIDE SEQUENCE [GENOMIC DNA]</scope>
</reference>
<reference key="2">
    <citation type="journal article" date="2017" name="Nature">
        <title>Non-homeostatic body weight regulation through a brainstem-restricted receptor for GDF15.</title>
        <authorList>
            <person name="Hsu J.Y."/>
            <person name="Crawley S."/>
            <person name="Chen M."/>
            <person name="Ayupova D.A."/>
            <person name="Lindhout D.A."/>
            <person name="Higbee J."/>
            <person name="Kutach A."/>
            <person name="Joo W."/>
            <person name="Gao Z."/>
            <person name="Fu D."/>
            <person name="To C."/>
            <person name="Mondal K."/>
            <person name="Li B."/>
            <person name="Kekatpure A."/>
            <person name="Wang M."/>
            <person name="Laird T."/>
            <person name="Horner G."/>
            <person name="Chan J."/>
            <person name="McEntee M."/>
            <person name="Lopez M."/>
            <person name="Lakshminarasimhan D."/>
            <person name="White A."/>
            <person name="Wang S.P."/>
            <person name="Yao J."/>
            <person name="Yie J."/>
            <person name="Matern H."/>
            <person name="Solloway M."/>
            <person name="Haldankar R."/>
            <person name="Parsons T."/>
            <person name="Tang J."/>
            <person name="Shen W.D."/>
            <person name="Alice Chen Y."/>
            <person name="Tian H."/>
            <person name="Allan B.B."/>
        </authorList>
    </citation>
    <scope>FUNCTION</scope>
</reference>
<reference key="3">
    <citation type="journal article" date="2017" name="Nature">
        <title>Non-homeostatic body weight regulation through a brainstem-restricted receptor for GDF15.</title>
        <authorList>
            <person name="Hsu J.Y."/>
            <person name="Crawley S."/>
            <person name="Chen M."/>
            <person name="Ayupova D.A."/>
            <person name="Lindhout D.A."/>
            <person name="Higbee J."/>
            <person name="Kutach A."/>
            <person name="Joo W."/>
            <person name="Gao Z."/>
            <person name="Fu D."/>
            <person name="To C."/>
            <person name="Mondal K."/>
            <person name="Li B."/>
            <person name="Kekatpure A."/>
            <person name="Wang M."/>
            <person name="Laird T."/>
            <person name="Horner G."/>
            <person name="Chan J."/>
            <person name="McEntee M."/>
            <person name="Lopez M."/>
            <person name="Lakshminarasimhan D."/>
            <person name="White A."/>
            <person name="Wang S.P."/>
            <person name="Yao J."/>
            <person name="Yie J."/>
            <person name="Matern H."/>
            <person name="Solloway M."/>
            <person name="Haldankar R."/>
            <person name="Parsons T."/>
            <person name="Tang J."/>
            <person name="Shen W.D."/>
            <person name="Alice Chen Y."/>
            <person name="Tian H."/>
            <person name="Allan B.B."/>
        </authorList>
    </citation>
    <scope>ERRATUM OF PUBMED:28953886</scope>
</reference>
<reference key="4">
    <citation type="journal article" date="2017" name="Nat. Med.">
        <title>GFRAL is the receptor for GDF15 and is required for the anti-obesity effects of the ligand.</title>
        <authorList>
            <person name="Yang L."/>
            <person name="Chang C.C."/>
            <person name="Sun Z."/>
            <person name="Madsen D."/>
            <person name="Zhu H."/>
            <person name="Padkjaer S.B."/>
            <person name="Wu X."/>
            <person name="Huang T."/>
            <person name="Hultman K."/>
            <person name="Paulsen S.J."/>
            <person name="Wang J."/>
            <person name="Bugge A."/>
            <person name="Frantzen J.B."/>
            <person name="Noergaard P."/>
            <person name="Jeppesen J.F."/>
            <person name="Yang Z."/>
            <person name="Secher A."/>
            <person name="Chen H."/>
            <person name="Li X."/>
            <person name="John L.M."/>
            <person name="Shan B."/>
            <person name="He Z."/>
            <person name="Gao X."/>
            <person name="Su J."/>
            <person name="Hansen K.T."/>
            <person name="Yang W."/>
            <person name="Joergensen S.B."/>
        </authorList>
    </citation>
    <scope>FUNCTION</scope>
</reference>
<reference key="5">
    <citation type="journal article" date="2017" name="Sci. Transl. Med.">
        <title>Long-acting MIC-1/GDF15 molecules to treat obesity: Evidence from mice to monkeys.</title>
        <authorList>
            <person name="Xiong Y."/>
            <person name="Walker K."/>
            <person name="Min X."/>
            <person name="Hale C."/>
            <person name="Tran T."/>
            <person name="Komorowski R."/>
            <person name="Yang J."/>
            <person name="Davda J."/>
            <person name="Nuanmanee N."/>
            <person name="Kemp D."/>
            <person name="Wang X."/>
            <person name="Liu H."/>
            <person name="Miller S."/>
            <person name="Lee K.J."/>
            <person name="Wang Z."/>
            <person name="Veniant M.M."/>
        </authorList>
    </citation>
    <scope>INDUCTION BY OBESITY</scope>
    <scope>TISSUE SPECIFICITY</scope>
    <scope>SUBCELLULAR LOCATION</scope>
</reference>
<reference key="6">
    <citation type="journal article" date="2020" name="Cell Metab.">
        <title>GDF15 induces anorexia through nausea and emesis.</title>
        <authorList>
            <person name="Borner T."/>
            <person name="Shaulson E.D."/>
            <person name="Ghidewon M.Y."/>
            <person name="Barnett A.B."/>
            <person name="Horn C.C."/>
            <person name="Doyle R.P."/>
            <person name="Grill H.J."/>
            <person name="Hayes M.R."/>
            <person name="De Jonghe B.C."/>
        </authorList>
    </citation>
    <scope>FUNCTION</scope>
</reference>
<reference key="7">
    <citation type="journal article" date="2021" name="Proc. Natl. Acad. Sci. U.S.A.">
        <title>Activation of the hypothalamic-pituitary-adrenal axis by exogenous and endogenous GDF15.</title>
        <authorList>
            <person name="Cimino I."/>
            <person name="Kim H."/>
            <person name="Tung Y.C.L."/>
            <person name="Pedersen K."/>
            <person name="Rimmington D."/>
            <person name="Tadross J.A."/>
            <person name="Kohnke S.N."/>
            <person name="Neves-Costa A."/>
            <person name="Barros A."/>
            <person name="Joaquim S."/>
            <person name="Bennett D."/>
            <person name="Melvin A."/>
            <person name="Lockhart S.M."/>
            <person name="Rostron A.J."/>
            <person name="Scott J."/>
            <person name="Liu H."/>
            <person name="Burling K."/>
            <person name="Barker P."/>
            <person name="Clatworthy M.R."/>
            <person name="Lee E.C."/>
            <person name="Simpson A.J."/>
            <person name="Yeo G.S.H."/>
            <person name="Moita L.F."/>
            <person name="Bence K.K."/>
            <person name="Joergensen S.B."/>
            <person name="Coll A.P."/>
            <person name="Breen D.M."/>
            <person name="O'Rahilly S."/>
        </authorList>
    </citation>
    <scope>FUNCTION</scope>
</reference>
<reference key="8">
    <citation type="journal article" date="2023" name="Cell Metab.">
        <title>Metformin triggers a kidney GDF15-dependent area postrema axis to regulate food intake and body weight.</title>
        <authorList>
            <person name="Zhang S.Y."/>
            <person name="Bruce K."/>
            <person name="Danaei Z."/>
            <person name="Li R.J.W."/>
            <person name="Barros D.R."/>
            <person name="Kuah R."/>
            <person name="Lim Y.M."/>
            <person name="Mariani L.H."/>
            <person name="Cherney D.Z."/>
            <person name="Chiu J.F.M."/>
            <person name="Reich H.N."/>
            <person name="Lam T.K.T."/>
        </authorList>
    </citation>
    <scope>FUNCTION</scope>
</reference>
<accession>Q9Z0J6</accession>
<sequence length="303" mass="33439">MALRALHAQPTGGPQLRFLLFLLLLLLLLSWPSQGDALALPEQRRSLSESQLNPDELRGRFQDLLSRLHANQSREDSNSEPTPDPAVRILSPEVRLGSHGRLLLRVNRASLTQGLPEAYRVHRALLLLTPSSRPWDITRPLQRAISLQGPHARALRLRLAPPPDLAVLPSGGARLELHLRSAAGRGRRSAHLHPRDSCPLGPGRCCHLETVQATLEDLGWSDWVLSPRQLQLSMCVGECPHLYRSANTHALIKARLHGLQPDRVPAPCCVPSSYTPVVLMHRTDSGVSLQTYDDLVAQGCHCA</sequence>
<organism>
    <name type="scientific">Rattus norvegicus</name>
    <name type="common">Rat</name>
    <dbReference type="NCBI Taxonomy" id="10116"/>
    <lineage>
        <taxon>Eukaryota</taxon>
        <taxon>Metazoa</taxon>
        <taxon>Chordata</taxon>
        <taxon>Craniata</taxon>
        <taxon>Vertebrata</taxon>
        <taxon>Euteleostomi</taxon>
        <taxon>Mammalia</taxon>
        <taxon>Eutheria</taxon>
        <taxon>Euarchontoglires</taxon>
        <taxon>Glires</taxon>
        <taxon>Rodentia</taxon>
        <taxon>Myomorpha</taxon>
        <taxon>Muroidea</taxon>
        <taxon>Muridae</taxon>
        <taxon>Murinae</taxon>
        <taxon>Rattus</taxon>
    </lineage>
</organism>
<protein>
    <recommendedName>
        <fullName evidence="10">Growth/differentiation factor 15</fullName>
        <shortName evidence="10">GDF-15</shortName>
    </recommendedName>
</protein>
<proteinExistence type="evidence at protein level"/>
<dbReference type="EMBL" id="AJ011969">
    <property type="protein sequence ID" value="CAA09891.1"/>
    <property type="molecule type" value="Genomic_DNA"/>
</dbReference>
<dbReference type="EMBL" id="AJ011970">
    <property type="protein sequence ID" value="CAA09891.1"/>
    <property type="status" value="JOINED"/>
    <property type="molecule type" value="Genomic_DNA"/>
</dbReference>
<dbReference type="RefSeq" id="NP_062089.1">
    <property type="nucleotide sequence ID" value="NM_019216.2"/>
</dbReference>
<dbReference type="SMR" id="Q9Z0J6"/>
<dbReference type="FunCoup" id="Q9Z0J6">
    <property type="interactions" value="37"/>
</dbReference>
<dbReference type="STRING" id="10116.ENSRNOP00000026652"/>
<dbReference type="GlyCosmos" id="Q9Z0J6">
    <property type="glycosylation" value="1 site, No reported glycans"/>
</dbReference>
<dbReference type="GlyGen" id="Q9Z0J6">
    <property type="glycosylation" value="2 sites"/>
</dbReference>
<dbReference type="PhosphoSitePlus" id="Q9Z0J6"/>
<dbReference type="PaxDb" id="10116-ENSRNOP00000026652"/>
<dbReference type="GeneID" id="29455"/>
<dbReference type="KEGG" id="rno:29455"/>
<dbReference type="UCSC" id="RGD:2674">
    <property type="organism name" value="rat"/>
</dbReference>
<dbReference type="AGR" id="RGD:2674"/>
<dbReference type="CTD" id="9518"/>
<dbReference type="RGD" id="2674">
    <property type="gene designation" value="Gdf15"/>
</dbReference>
<dbReference type="eggNOG" id="KOG3900">
    <property type="taxonomic scope" value="Eukaryota"/>
</dbReference>
<dbReference type="InParanoid" id="Q9Z0J6"/>
<dbReference type="PhylomeDB" id="Q9Z0J6"/>
<dbReference type="PRO" id="PR:Q9Z0J6"/>
<dbReference type="Proteomes" id="UP000002494">
    <property type="component" value="Unplaced"/>
</dbReference>
<dbReference type="GO" id="GO:0005737">
    <property type="term" value="C:cytoplasm"/>
    <property type="evidence" value="ECO:0000250"/>
    <property type="project" value="UniProtKB"/>
</dbReference>
<dbReference type="GO" id="GO:0005576">
    <property type="term" value="C:extracellular region"/>
    <property type="evidence" value="ECO:0000314"/>
    <property type="project" value="UniProtKB"/>
</dbReference>
<dbReference type="GO" id="GO:0005615">
    <property type="term" value="C:extracellular space"/>
    <property type="evidence" value="ECO:0000250"/>
    <property type="project" value="UniProtKB"/>
</dbReference>
<dbReference type="GO" id="GO:0005634">
    <property type="term" value="C:nucleus"/>
    <property type="evidence" value="ECO:0000250"/>
    <property type="project" value="UniProtKB"/>
</dbReference>
<dbReference type="GO" id="GO:0005125">
    <property type="term" value="F:cytokine activity"/>
    <property type="evidence" value="ECO:0000250"/>
    <property type="project" value="UniProtKB"/>
</dbReference>
<dbReference type="GO" id="GO:0008083">
    <property type="term" value="F:growth factor activity"/>
    <property type="evidence" value="ECO:0007669"/>
    <property type="project" value="InterPro"/>
</dbReference>
<dbReference type="GO" id="GO:0005179">
    <property type="term" value="F:hormone activity"/>
    <property type="evidence" value="ECO:0000250"/>
    <property type="project" value="UniProtKB"/>
</dbReference>
<dbReference type="GO" id="GO:0042803">
    <property type="term" value="F:protein homodimerization activity"/>
    <property type="evidence" value="ECO:0000314"/>
    <property type="project" value="UniProtKB"/>
</dbReference>
<dbReference type="GO" id="GO:0062197">
    <property type="term" value="P:cellular response to chemical stress"/>
    <property type="evidence" value="ECO:0000266"/>
    <property type="project" value="RGD"/>
</dbReference>
<dbReference type="GO" id="GO:0097009">
    <property type="term" value="P:energy homeostasis"/>
    <property type="evidence" value="ECO:0000266"/>
    <property type="project" value="RGD"/>
</dbReference>
<dbReference type="GO" id="GO:0160144">
    <property type="term" value="P:GDF15-GFRAL signaling pathway"/>
    <property type="evidence" value="ECO:0000250"/>
    <property type="project" value="UniProtKB"/>
</dbReference>
<dbReference type="GO" id="GO:0032099">
    <property type="term" value="P:negative regulation of appetite"/>
    <property type="evidence" value="ECO:0000250"/>
    <property type="project" value="UniProtKB"/>
</dbReference>
<dbReference type="GO" id="GO:0060400">
    <property type="term" value="P:negative regulation of growth hormone receptor signaling pathway"/>
    <property type="evidence" value="ECO:0000250"/>
    <property type="project" value="UniProtKB"/>
</dbReference>
<dbReference type="GO" id="GO:0002686">
    <property type="term" value="P:negative regulation of leukocyte migration"/>
    <property type="evidence" value="ECO:0000266"/>
    <property type="project" value="RGD"/>
</dbReference>
<dbReference type="GO" id="GO:0040015">
    <property type="term" value="P:negative regulation of multicellular organism growth"/>
    <property type="evidence" value="ECO:0000250"/>
    <property type="project" value="UniProtKB"/>
</dbReference>
<dbReference type="GO" id="GO:0060392">
    <property type="term" value="P:negative regulation of SMAD protein signal transduction"/>
    <property type="evidence" value="ECO:0000250"/>
    <property type="project" value="UniProtKB"/>
</dbReference>
<dbReference type="GO" id="GO:0030512">
    <property type="term" value="P:negative regulation of transforming growth factor beta receptor signaling pathway"/>
    <property type="evidence" value="ECO:0000266"/>
    <property type="project" value="RGD"/>
</dbReference>
<dbReference type="GO" id="GO:0046321">
    <property type="term" value="P:positive regulation of fatty acid oxidation"/>
    <property type="evidence" value="ECO:0000266"/>
    <property type="project" value="RGD"/>
</dbReference>
<dbReference type="GO" id="GO:0043410">
    <property type="term" value="P:positive regulation of MAPK cascade"/>
    <property type="evidence" value="ECO:0000250"/>
    <property type="project" value="UniProtKB"/>
</dbReference>
<dbReference type="GO" id="GO:1901741">
    <property type="term" value="P:positive regulation of myoblast fusion"/>
    <property type="evidence" value="ECO:0000266"/>
    <property type="project" value="RGD"/>
</dbReference>
<dbReference type="GO" id="GO:0051897">
    <property type="term" value="P:positive regulation of phosphatidylinositol 3-kinase/protein kinase B signal transduction"/>
    <property type="evidence" value="ECO:0000250"/>
    <property type="project" value="UniProtKB"/>
</dbReference>
<dbReference type="GO" id="GO:0002023">
    <property type="term" value="P:reduction of food intake in response to dietary excess"/>
    <property type="evidence" value="ECO:0000250"/>
    <property type="project" value="UniProtKB"/>
</dbReference>
<dbReference type="GO" id="GO:1901558">
    <property type="term" value="P:response to metformin"/>
    <property type="evidence" value="ECO:0000266"/>
    <property type="project" value="RGD"/>
</dbReference>
<dbReference type="FunFam" id="2.10.90.10:FF:000039">
    <property type="entry name" value="growth/differentiation factor 15"/>
    <property type="match status" value="1"/>
</dbReference>
<dbReference type="Gene3D" id="2.10.90.10">
    <property type="entry name" value="Cystine-knot cytokines"/>
    <property type="match status" value="1"/>
</dbReference>
<dbReference type="InterPro" id="IPR029034">
    <property type="entry name" value="Cystine-knot_cytokine"/>
</dbReference>
<dbReference type="InterPro" id="IPR001839">
    <property type="entry name" value="TGF-b_C"/>
</dbReference>
<dbReference type="InterPro" id="IPR015615">
    <property type="entry name" value="TGF-beta-rel"/>
</dbReference>
<dbReference type="PANTHER" id="PTHR11848:SF78">
    <property type="entry name" value="GROWTH_DIFFERENTIATION FACTOR 15"/>
    <property type="match status" value="1"/>
</dbReference>
<dbReference type="PANTHER" id="PTHR11848">
    <property type="entry name" value="TGF-BETA FAMILY"/>
    <property type="match status" value="1"/>
</dbReference>
<dbReference type="Pfam" id="PF00019">
    <property type="entry name" value="TGF_beta"/>
    <property type="match status" value="1"/>
</dbReference>
<dbReference type="SMART" id="SM00204">
    <property type="entry name" value="TGFB"/>
    <property type="match status" value="1"/>
</dbReference>
<dbReference type="SUPFAM" id="SSF57501">
    <property type="entry name" value="Cystine-knot cytokines"/>
    <property type="match status" value="1"/>
</dbReference>
<dbReference type="PROSITE" id="PS51362">
    <property type="entry name" value="TGF_BETA_2"/>
    <property type="match status" value="1"/>
</dbReference>
<evidence type="ECO:0000250" key="1">
    <source>
        <dbReference type="UniProtKB" id="Q99988"/>
    </source>
</evidence>
<evidence type="ECO:0000250" key="2">
    <source>
        <dbReference type="UniProtKB" id="Q9Z0J7"/>
    </source>
</evidence>
<evidence type="ECO:0000255" key="3"/>
<evidence type="ECO:0000269" key="4">
    <source>
    </source>
</evidence>
<evidence type="ECO:0000269" key="5">
    <source>
    </source>
</evidence>
<evidence type="ECO:0000269" key="6">
    <source>
    </source>
</evidence>
<evidence type="ECO:0000269" key="7">
    <source>
    </source>
</evidence>
<evidence type="ECO:0000269" key="8">
    <source>
    </source>
</evidence>
<evidence type="ECO:0000269" key="9">
    <source>
    </source>
</evidence>
<evidence type="ECO:0000303" key="10">
    <source>
    </source>
</evidence>
<evidence type="ECO:0000305" key="11"/>
<evidence type="ECO:0000312" key="12">
    <source>
        <dbReference type="RGD" id="2674"/>
    </source>
</evidence>
<feature type="signal peptide" evidence="3">
    <location>
        <begin position="1"/>
        <end position="30"/>
    </location>
</feature>
<feature type="propeptide" id="PRO_0000033996" evidence="3">
    <location>
        <begin position="31"/>
        <end position="188"/>
    </location>
</feature>
<feature type="chain" id="PRO_0000033997" description="Growth/differentiation factor 15">
    <location>
        <begin position="189"/>
        <end position="303"/>
    </location>
</feature>
<feature type="glycosylation site" description="N-linked (GlcNAc...) asparagine" evidence="3">
    <location>
        <position position="71"/>
    </location>
</feature>
<feature type="disulfide bond" evidence="1">
    <location>
        <begin position="198"/>
        <end position="205"/>
    </location>
</feature>
<feature type="disulfide bond" evidence="1">
    <location>
        <begin position="206"/>
        <end position="269"/>
    </location>
</feature>
<feature type="disulfide bond" evidence="1">
    <location>
        <begin position="235"/>
        <end position="300"/>
    </location>
</feature>
<feature type="disulfide bond" evidence="1">
    <location>
        <begin position="239"/>
        <end position="302"/>
    </location>
</feature>
<feature type="disulfide bond" description="Interchain" evidence="1">
    <location>
        <position position="268"/>
    </location>
</feature>